<dbReference type="EMBL" id="M17146">
    <property type="protein sequence ID" value="AAA33010.1"/>
    <property type="molecule type" value="mRNA"/>
</dbReference>
<dbReference type="EMBL" id="X57027">
    <property type="protein sequence ID" value="CAA40343.1"/>
    <property type="molecule type" value="Genomic_DNA"/>
</dbReference>
<dbReference type="EMBL" id="X57028">
    <property type="protein sequence ID" value="CAA40344.1"/>
    <property type="molecule type" value="Genomic_DNA"/>
</dbReference>
<dbReference type="EMBL" id="X54490">
    <property type="protein sequence ID" value="CAA38362.1"/>
    <property type="molecule type" value="Genomic_DNA"/>
</dbReference>
<dbReference type="EMBL" id="AB044391">
    <property type="protein sequence ID" value="BAA96554.1"/>
    <property type="molecule type" value="Genomic_DNA"/>
</dbReference>
<dbReference type="PIR" id="A25802">
    <property type="entry name" value="A25802"/>
</dbReference>
<dbReference type="PIR" id="S14946">
    <property type="entry name" value="S14946"/>
</dbReference>
<dbReference type="PDB" id="2LVF">
    <property type="method" value="NMR"/>
    <property type="chains" value="A=37-146"/>
</dbReference>
<dbReference type="PDBsum" id="2LVF"/>
<dbReference type="SMR" id="P04403"/>
<dbReference type="Allergome" id="3134">
    <property type="allergen name" value="Ber e 1.0101"/>
</dbReference>
<dbReference type="Allergome" id="88">
    <property type="allergen name" value="Ber e 1"/>
</dbReference>
<dbReference type="EvolutionaryTrace" id="P04403"/>
<dbReference type="GO" id="GO:0045735">
    <property type="term" value="F:nutrient reservoir activity"/>
    <property type="evidence" value="ECO:0007669"/>
    <property type="project" value="UniProtKB-KW"/>
</dbReference>
<dbReference type="CDD" id="cd00261">
    <property type="entry name" value="AAI_SS"/>
    <property type="match status" value="1"/>
</dbReference>
<dbReference type="Gene3D" id="1.10.110.10">
    <property type="entry name" value="Plant lipid-transfer and hydrophobic proteins"/>
    <property type="match status" value="1"/>
</dbReference>
<dbReference type="InterPro" id="IPR036312">
    <property type="entry name" value="Bifun_inhib/LTP/seed_sf"/>
</dbReference>
<dbReference type="InterPro" id="IPR016140">
    <property type="entry name" value="Bifunc_inhib/LTP/seed_store"/>
</dbReference>
<dbReference type="InterPro" id="IPR000617">
    <property type="entry name" value="Napin/2SS/CON"/>
</dbReference>
<dbReference type="PANTHER" id="PTHR35496">
    <property type="entry name" value="2S SEED STORAGE PROTEIN 1-RELATED"/>
    <property type="match status" value="1"/>
</dbReference>
<dbReference type="PANTHER" id="PTHR35496:SF4">
    <property type="entry name" value="2S SULFUR-RICH SEED STORAGE PROTEIN 2-LIKE"/>
    <property type="match status" value="1"/>
</dbReference>
<dbReference type="Pfam" id="PF00234">
    <property type="entry name" value="Tryp_alpha_amyl"/>
    <property type="match status" value="1"/>
</dbReference>
<dbReference type="PRINTS" id="PR00496">
    <property type="entry name" value="NAPIN"/>
</dbReference>
<dbReference type="SMART" id="SM00499">
    <property type="entry name" value="AAI"/>
    <property type="match status" value="1"/>
</dbReference>
<dbReference type="SUPFAM" id="SSF47699">
    <property type="entry name" value="Bifunctional inhibitor/lipid-transfer protein/seed storage 2S albumin"/>
    <property type="match status" value="1"/>
</dbReference>
<sequence>MAKISVAAAALLVLMALGHATAFRATVTTTVVEEENQEECREQMQRQQMLSHCRMYMRQQMEESPYQTMPRRGMEPHMSECCEQLEGMDESCRCEGLRMMMMRMQQEEMQPRGEQMRRMMRLAENIPSRCNLSPMRCPMGGSIAGF</sequence>
<keyword id="KW-0002">3D-structure</keyword>
<keyword id="KW-0020">Allergen</keyword>
<keyword id="KW-0903">Direct protein sequencing</keyword>
<keyword id="KW-1015">Disulfide bond</keyword>
<keyword id="KW-0873">Pyrrolidone carboxylic acid</keyword>
<keyword id="KW-0708">Seed storage protein</keyword>
<keyword id="KW-0732">Signal</keyword>
<keyword id="KW-0758">Storage protein</keyword>
<comment type="function">
    <text>This is a 2S seed storage protein.</text>
</comment>
<comment type="subunit">
    <text>The mature protein consists of a small and a large chain linked by disulfide bonds.</text>
</comment>
<comment type="allergen">
    <text>Causes an allergic reaction in human.</text>
</comment>
<comment type="similarity">
    <text evidence="4">Belongs to the 2S seed storage albumins family.</text>
</comment>
<feature type="signal peptide" evidence="1">
    <location>
        <begin position="1"/>
        <end position="22"/>
    </location>
</feature>
<feature type="propeptide" id="PRO_0000032105" evidence="3">
    <location>
        <begin position="23"/>
        <end position="36"/>
    </location>
</feature>
<feature type="chain" id="PRO_0000032106" description="2S sulfur-rich seed storage protein small chain 1">
    <location>
        <begin position="37"/>
        <end position="64"/>
    </location>
</feature>
<feature type="propeptide" id="PRO_0000032107" evidence="3">
    <location>
        <begin position="65"/>
        <end position="69"/>
    </location>
</feature>
<feature type="chain" id="PRO_0000032108" description="2S sulfur-rich seed storage protein large chain 1B">
    <location>
        <begin position="70"/>
        <end position="142"/>
    </location>
</feature>
<feature type="propeptide" id="PRO_0000032109">
    <location>
        <begin position="143"/>
        <end position="146"/>
    </location>
</feature>
<feature type="modified residue" description="Pyrrolidone carboxylic acid" evidence="3">
    <location>
        <position position="37"/>
    </location>
</feature>
<feature type="disulfide bond" description="Interchain (between small and large chains)" evidence="2">
    <location>
        <begin position="40"/>
        <end position="92"/>
    </location>
</feature>
<feature type="disulfide bond" description="Interchain (between small and large chains)" evidence="2">
    <location>
        <begin position="53"/>
        <end position="81"/>
    </location>
</feature>
<feature type="disulfide bond" evidence="2">
    <location>
        <begin position="82"/>
        <end position="130"/>
    </location>
</feature>
<feature type="disulfide bond" evidence="2">
    <location>
        <begin position="94"/>
        <end position="137"/>
    </location>
</feature>
<feature type="sequence variant" description="In variant 1A.">
    <original>S</original>
    <variation>E</variation>
    <location>
        <position position="91"/>
    </location>
</feature>
<feature type="sequence conflict" description="In Ref. 5; AA sequence." evidence="4" ref="5">
    <original>EE</original>
    <variation>QQ</variation>
    <location>
        <begin position="38"/>
        <end position="39"/>
    </location>
</feature>
<feature type="sequence conflict" description="In Ref. 4; BAA96554." evidence="4" ref="4">
    <original>MR</original>
    <variation>RM</variation>
    <location>
        <begin position="102"/>
        <end position="103"/>
    </location>
</feature>
<feature type="sequence conflict" description="In Ref. 4; BAA96554." evidence="4" ref="4">
    <original>E</original>
    <variation>K</variation>
    <location>
        <position position="107"/>
    </location>
</feature>
<feature type="sequence conflict" description="In Ref. 5; AA sequence." evidence="4" ref="5">
    <original>L</original>
    <variation>M</variation>
    <location>
        <position position="122"/>
    </location>
</feature>
<feature type="sequence conflict" description="In Ref. 5; AA sequence." evidence="4" ref="5">
    <original>I</original>
    <variation>L</variation>
    <location>
        <position position="126"/>
    </location>
</feature>
<feature type="helix" evidence="5">
    <location>
        <begin position="37"/>
        <end position="46"/>
    </location>
</feature>
<feature type="helix" evidence="5">
    <location>
        <begin position="49"/>
        <end position="62"/>
    </location>
</feature>
<feature type="turn" evidence="5">
    <location>
        <begin position="63"/>
        <end position="66"/>
    </location>
</feature>
<feature type="strand" evidence="5">
    <location>
        <begin position="71"/>
        <end position="73"/>
    </location>
</feature>
<feature type="helix" evidence="5">
    <location>
        <begin position="76"/>
        <end position="87"/>
    </location>
</feature>
<feature type="helix" evidence="5">
    <location>
        <begin position="90"/>
        <end position="108"/>
    </location>
</feature>
<feature type="helix" evidence="5">
    <location>
        <begin position="114"/>
        <end position="130"/>
    </location>
</feature>
<feature type="turn" evidence="5">
    <location>
        <begin position="138"/>
        <end position="141"/>
    </location>
</feature>
<proteinExistence type="evidence at protein level"/>
<gene>
    <name type="primary">BE2S1</name>
</gene>
<accession>P04403</accession>
<accession>P04402</accession>
<accession>Q9LRC2</accession>
<evidence type="ECO:0000255" key="1"/>
<evidence type="ECO:0000269" key="2">
    <source>
    </source>
</evidence>
<evidence type="ECO:0000269" key="3">
    <source>
    </source>
</evidence>
<evidence type="ECO:0000305" key="4"/>
<evidence type="ECO:0007829" key="5">
    <source>
        <dbReference type="PDB" id="2LVF"/>
    </source>
</evidence>
<organism>
    <name type="scientific">Bertholletia excelsa</name>
    <name type="common">Brazil nut</name>
    <dbReference type="NCBI Taxonomy" id="3645"/>
    <lineage>
        <taxon>Eukaryota</taxon>
        <taxon>Viridiplantae</taxon>
        <taxon>Streptophyta</taxon>
        <taxon>Embryophyta</taxon>
        <taxon>Tracheophyta</taxon>
        <taxon>Spermatophyta</taxon>
        <taxon>Magnoliopsida</taxon>
        <taxon>eudicotyledons</taxon>
        <taxon>Gunneridae</taxon>
        <taxon>Pentapetalae</taxon>
        <taxon>asterids</taxon>
        <taxon>Ericales</taxon>
        <taxon>Lecythidaceae</taxon>
        <taxon>Bertholletia</taxon>
    </lineage>
</organism>
<name>2SS1_BEREX</name>
<protein>
    <recommendedName>
        <fullName>2S sulfur-rich seed storage protein 1</fullName>
    </recommendedName>
    <allergenName>Ber e 1</allergenName>
    <component>
        <recommendedName>
            <fullName>2S sulfur-rich seed storage protein small chain 1</fullName>
        </recommendedName>
        <alternativeName>
            <fullName>2S albumin 1 small subunit</fullName>
        </alternativeName>
    </component>
    <component>
        <recommendedName>
            <fullName>2S sulfur-rich seed storage protein large chain 1B</fullName>
        </recommendedName>
        <alternativeName>
            <fullName>2S albumin 1 large subunit</fullName>
        </alternativeName>
    </component>
</protein>
<reference key="1">
    <citation type="journal article" date="1987" name="Plant Mol. Biol.">
        <title>Cloning and sequence analysis of a cDNA encoding a Brazil nut protein exceptionally rich in methionine.</title>
        <authorList>
            <person name="Altenbach S.B."/>
            <person name="Pearson K.W."/>
            <person name="Leung F.W."/>
            <person name="Sun S.S.M."/>
        </authorList>
    </citation>
    <scope>NUCLEOTIDE SEQUENCE [MRNA]</scope>
</reference>
<reference key="2">
    <citation type="submission" date="1990-12" db="EMBL/GenBank/DDBJ databases">
        <authorList>
            <person name="Bassuener R."/>
        </authorList>
    </citation>
    <scope>NUCLEOTIDE SEQUENCE [GENOMIC DNA]</scope>
</reference>
<reference key="3">
    <citation type="journal article" date="1991" name="Plant Mol. Biol.">
        <title>Isolation, characterization and expression of a gene coding for a 2S albumin from Bertholletia excelsa (Brazil nut).</title>
        <authorList>
            <person name="Gander E.S."/>
            <person name="Holmstroem K.O."/>
            <person name="de Paiva G.R."/>
            <person name="de Castro L.A.B."/>
            <person name="Carneiro M."/>
            <person name="Grossi de Sa M.F."/>
        </authorList>
    </citation>
    <scope>NUCLEOTIDE SEQUENCE [GENOMIC DNA]</scope>
</reference>
<reference key="4">
    <citation type="submission" date="2000-06" db="EMBL/GenBank/DDBJ databases">
        <title>Brazil nut 2S albumin was synthesized in a transgenic French bean seed with a promoter of the gene for canavalin, 7S globulin from Canavalia gladiata.</title>
        <authorList>
            <person name="Yamauchi D."/>
        </authorList>
    </citation>
    <scope>NUCLEOTIDE SEQUENCE [GENOMIC DNA]</scope>
</reference>
<reference key="5">
    <citation type="journal article" date="1986" name="Eur. J. Biochem.">
        <title>The amino-acid sequence of the 2S sulphur-rich proteins from seeds of Brazil nut (Bertholletia excelsa H.B.K.).</title>
        <authorList>
            <person name="Ampe C."/>
            <person name="van Damme J."/>
            <person name="de Castro L.A.B."/>
            <person name="Sampaio M.J.A.M."/>
            <person name="van Montagu M."/>
            <person name="Vandekerckhove J."/>
        </authorList>
    </citation>
    <scope>PROTEIN SEQUENCE OF 37-64 AND 70-142</scope>
    <scope>PYROGLUTAMATE FORMATION AT GLN-37</scope>
</reference>
<reference key="6">
    <citation type="journal article" date="2002" name="J. Mol. Biol.">
        <title>The disulphide mapping, folding and characterisation of recombinant Ber e 1, an allergenic protein, and SFA8, two sulphur-rich 2S plant albumins.</title>
        <authorList>
            <person name="Alcocer M.J."/>
            <person name="Murtagh G.J."/>
            <person name="Bailey K."/>
            <person name="Dumoulin M."/>
            <person name="Meseguer A.S."/>
            <person name="Parker M.J."/>
            <person name="Archer D.B."/>
        </authorList>
    </citation>
    <scope>3D-STRUCTURE MODELING</scope>
    <scope>GLYCOSYLATION</scope>
    <scope>DISULFIDE BONDS</scope>
</reference>